<protein>
    <recommendedName>
        <fullName evidence="1">Phosphopantetheine adenylyltransferase</fullName>
        <ecNumber evidence="1">2.7.7.3</ecNumber>
    </recommendedName>
    <alternativeName>
        <fullName evidence="1">Dephospho-CoA pyrophosphorylase</fullName>
    </alternativeName>
    <alternativeName>
        <fullName evidence="1">Pantetheine-phosphate adenylyltransferase</fullName>
        <shortName evidence="1">PPAT</shortName>
    </alternativeName>
</protein>
<evidence type="ECO:0000255" key="1">
    <source>
        <dbReference type="HAMAP-Rule" id="MF_00151"/>
    </source>
</evidence>
<gene>
    <name evidence="1" type="primary">coaD</name>
    <name type="ordered locus">HEAR2900</name>
</gene>
<name>COAD_HERAR</name>
<comment type="function">
    <text evidence="1">Reversibly transfers an adenylyl group from ATP to 4'-phosphopantetheine, yielding dephospho-CoA (dPCoA) and pyrophosphate.</text>
</comment>
<comment type="catalytic activity">
    <reaction evidence="1">
        <text>(R)-4'-phosphopantetheine + ATP + H(+) = 3'-dephospho-CoA + diphosphate</text>
        <dbReference type="Rhea" id="RHEA:19801"/>
        <dbReference type="ChEBI" id="CHEBI:15378"/>
        <dbReference type="ChEBI" id="CHEBI:30616"/>
        <dbReference type="ChEBI" id="CHEBI:33019"/>
        <dbReference type="ChEBI" id="CHEBI:57328"/>
        <dbReference type="ChEBI" id="CHEBI:61723"/>
        <dbReference type="EC" id="2.7.7.3"/>
    </reaction>
</comment>
<comment type="cofactor">
    <cofactor evidence="1">
        <name>Mg(2+)</name>
        <dbReference type="ChEBI" id="CHEBI:18420"/>
    </cofactor>
</comment>
<comment type="pathway">
    <text evidence="1">Cofactor biosynthesis; coenzyme A biosynthesis; CoA from (R)-pantothenate: step 4/5.</text>
</comment>
<comment type="subunit">
    <text evidence="1">Homohexamer.</text>
</comment>
<comment type="subcellular location">
    <subcellularLocation>
        <location evidence="1">Cytoplasm</location>
    </subcellularLocation>
</comment>
<comment type="similarity">
    <text evidence="1">Belongs to the bacterial CoaD family.</text>
</comment>
<dbReference type="EC" id="2.7.7.3" evidence="1"/>
<dbReference type="EMBL" id="CU207211">
    <property type="protein sequence ID" value="CAL63014.1"/>
    <property type="molecule type" value="Genomic_DNA"/>
</dbReference>
<dbReference type="SMR" id="A4G927"/>
<dbReference type="STRING" id="204773.HEAR2900"/>
<dbReference type="KEGG" id="har:HEAR2900"/>
<dbReference type="eggNOG" id="COG0669">
    <property type="taxonomic scope" value="Bacteria"/>
</dbReference>
<dbReference type="HOGENOM" id="CLU_100149_0_1_4"/>
<dbReference type="OrthoDB" id="9806661at2"/>
<dbReference type="UniPathway" id="UPA00241">
    <property type="reaction ID" value="UER00355"/>
</dbReference>
<dbReference type="Proteomes" id="UP000006697">
    <property type="component" value="Chromosome"/>
</dbReference>
<dbReference type="GO" id="GO:0005737">
    <property type="term" value="C:cytoplasm"/>
    <property type="evidence" value="ECO:0007669"/>
    <property type="project" value="UniProtKB-SubCell"/>
</dbReference>
<dbReference type="GO" id="GO:0005524">
    <property type="term" value="F:ATP binding"/>
    <property type="evidence" value="ECO:0007669"/>
    <property type="project" value="UniProtKB-KW"/>
</dbReference>
<dbReference type="GO" id="GO:0004595">
    <property type="term" value="F:pantetheine-phosphate adenylyltransferase activity"/>
    <property type="evidence" value="ECO:0007669"/>
    <property type="project" value="UniProtKB-UniRule"/>
</dbReference>
<dbReference type="GO" id="GO:0015937">
    <property type="term" value="P:coenzyme A biosynthetic process"/>
    <property type="evidence" value="ECO:0007669"/>
    <property type="project" value="UniProtKB-UniRule"/>
</dbReference>
<dbReference type="CDD" id="cd02163">
    <property type="entry name" value="PPAT"/>
    <property type="match status" value="1"/>
</dbReference>
<dbReference type="Gene3D" id="3.40.50.620">
    <property type="entry name" value="HUPs"/>
    <property type="match status" value="1"/>
</dbReference>
<dbReference type="HAMAP" id="MF_00151">
    <property type="entry name" value="PPAT_bact"/>
    <property type="match status" value="1"/>
</dbReference>
<dbReference type="InterPro" id="IPR004821">
    <property type="entry name" value="Cyt_trans-like"/>
</dbReference>
<dbReference type="InterPro" id="IPR001980">
    <property type="entry name" value="PPAT"/>
</dbReference>
<dbReference type="InterPro" id="IPR014729">
    <property type="entry name" value="Rossmann-like_a/b/a_fold"/>
</dbReference>
<dbReference type="NCBIfam" id="TIGR01510">
    <property type="entry name" value="coaD_prev_kdtB"/>
    <property type="match status" value="1"/>
</dbReference>
<dbReference type="NCBIfam" id="TIGR00125">
    <property type="entry name" value="cyt_tran_rel"/>
    <property type="match status" value="1"/>
</dbReference>
<dbReference type="PANTHER" id="PTHR21342">
    <property type="entry name" value="PHOSPHOPANTETHEINE ADENYLYLTRANSFERASE"/>
    <property type="match status" value="1"/>
</dbReference>
<dbReference type="PANTHER" id="PTHR21342:SF1">
    <property type="entry name" value="PHOSPHOPANTETHEINE ADENYLYLTRANSFERASE"/>
    <property type="match status" value="1"/>
</dbReference>
<dbReference type="Pfam" id="PF01467">
    <property type="entry name" value="CTP_transf_like"/>
    <property type="match status" value="1"/>
</dbReference>
<dbReference type="PRINTS" id="PR01020">
    <property type="entry name" value="LPSBIOSNTHSS"/>
</dbReference>
<dbReference type="SUPFAM" id="SSF52374">
    <property type="entry name" value="Nucleotidylyl transferase"/>
    <property type="match status" value="1"/>
</dbReference>
<reference key="1">
    <citation type="journal article" date="2007" name="PLoS Genet.">
        <title>A tale of two oxidation states: bacterial colonization of arsenic-rich environments.</title>
        <authorList>
            <person name="Muller D."/>
            <person name="Medigue C."/>
            <person name="Koechler S."/>
            <person name="Barbe V."/>
            <person name="Barakat M."/>
            <person name="Talla E."/>
            <person name="Bonnefoy V."/>
            <person name="Krin E."/>
            <person name="Arsene-Ploetze F."/>
            <person name="Carapito C."/>
            <person name="Chandler M."/>
            <person name="Cournoyer B."/>
            <person name="Cruveiller S."/>
            <person name="Dossat C."/>
            <person name="Duval S."/>
            <person name="Heymann M."/>
            <person name="Leize E."/>
            <person name="Lieutaud A."/>
            <person name="Lievremont D."/>
            <person name="Makita Y."/>
            <person name="Mangenot S."/>
            <person name="Nitschke W."/>
            <person name="Ortet P."/>
            <person name="Perdrial N."/>
            <person name="Schoepp B."/>
            <person name="Siguier P."/>
            <person name="Simeonova D.D."/>
            <person name="Rouy Z."/>
            <person name="Segurens B."/>
            <person name="Turlin E."/>
            <person name="Vallenet D."/>
            <person name="van Dorsselaer A."/>
            <person name="Weiss S."/>
            <person name="Weissenbach J."/>
            <person name="Lett M.-C."/>
            <person name="Danchin A."/>
            <person name="Bertin P.N."/>
        </authorList>
    </citation>
    <scope>NUCLEOTIDE SEQUENCE [LARGE SCALE GENOMIC DNA]</scope>
    <source>
        <strain>ULPAs1</strain>
    </source>
</reference>
<proteinExistence type="inferred from homology"/>
<keyword id="KW-0067">ATP-binding</keyword>
<keyword id="KW-0173">Coenzyme A biosynthesis</keyword>
<keyword id="KW-0963">Cytoplasm</keyword>
<keyword id="KW-0460">Magnesium</keyword>
<keyword id="KW-0547">Nucleotide-binding</keyword>
<keyword id="KW-0548">Nucleotidyltransferase</keyword>
<keyword id="KW-1185">Reference proteome</keyword>
<keyword id="KW-0808">Transferase</keyword>
<accession>A4G927</accession>
<organism>
    <name type="scientific">Herminiimonas arsenicoxydans</name>
    <dbReference type="NCBI Taxonomy" id="204773"/>
    <lineage>
        <taxon>Bacteria</taxon>
        <taxon>Pseudomonadati</taxon>
        <taxon>Pseudomonadota</taxon>
        <taxon>Betaproteobacteria</taxon>
        <taxon>Burkholderiales</taxon>
        <taxon>Oxalobacteraceae</taxon>
        <taxon>Herminiimonas</taxon>
    </lineage>
</organism>
<sequence>MVTAIYPGTFDPLTRGHEDLVRRASGLFDKLIVGVADSKNKKPFFSLEERLTISNEVLGHYPNVHVESFSGLLKDFVRRHDARVIVRGLRAVSDFEYEFQMAGMNRYLLPDVETLFLTPSDQYQFISGTIVREIAALGGDVSKFVFPSVDKWLKEKIAAQEQG</sequence>
<feature type="chain" id="PRO_1000011159" description="Phosphopantetheine adenylyltransferase">
    <location>
        <begin position="1"/>
        <end position="163"/>
    </location>
</feature>
<feature type="binding site" evidence="1">
    <location>
        <begin position="9"/>
        <end position="10"/>
    </location>
    <ligand>
        <name>ATP</name>
        <dbReference type="ChEBI" id="CHEBI:30616"/>
    </ligand>
</feature>
<feature type="binding site" evidence="1">
    <location>
        <position position="9"/>
    </location>
    <ligand>
        <name>substrate</name>
    </ligand>
</feature>
<feature type="binding site" evidence="1">
    <location>
        <position position="17"/>
    </location>
    <ligand>
        <name>ATP</name>
        <dbReference type="ChEBI" id="CHEBI:30616"/>
    </ligand>
</feature>
<feature type="binding site" evidence="1">
    <location>
        <position position="41"/>
    </location>
    <ligand>
        <name>substrate</name>
    </ligand>
</feature>
<feature type="binding site" evidence="1">
    <location>
        <position position="73"/>
    </location>
    <ligand>
        <name>substrate</name>
    </ligand>
</feature>
<feature type="binding site" evidence="1">
    <location>
        <position position="87"/>
    </location>
    <ligand>
        <name>substrate</name>
    </ligand>
</feature>
<feature type="binding site" evidence="1">
    <location>
        <begin position="88"/>
        <end position="90"/>
    </location>
    <ligand>
        <name>ATP</name>
        <dbReference type="ChEBI" id="CHEBI:30616"/>
    </ligand>
</feature>
<feature type="binding site" evidence="1">
    <location>
        <position position="98"/>
    </location>
    <ligand>
        <name>ATP</name>
        <dbReference type="ChEBI" id="CHEBI:30616"/>
    </ligand>
</feature>
<feature type="binding site" evidence="1">
    <location>
        <begin position="123"/>
        <end position="129"/>
    </location>
    <ligand>
        <name>ATP</name>
        <dbReference type="ChEBI" id="CHEBI:30616"/>
    </ligand>
</feature>
<feature type="site" description="Transition state stabilizer" evidence="1">
    <location>
        <position position="17"/>
    </location>
</feature>